<feature type="chain" id="PRO_0000326443" description="Unknown protein 1">
    <location>
        <begin position="1" status="less than"/>
        <end position="9" status="greater than"/>
    </location>
</feature>
<feature type="unsure residue" description="L or I">
    <location>
        <position position="2"/>
    </location>
</feature>
<feature type="unsure residue" description="L or I">
    <location>
        <position position="5"/>
    </location>
</feature>
<feature type="non-terminal residue" evidence="2">
    <location>
        <position position="1"/>
    </location>
</feature>
<feature type="non-terminal residue" evidence="2">
    <location>
        <position position="9"/>
    </location>
</feature>
<name>UP01_PINHA</name>
<reference evidence="3" key="1">
    <citation type="journal article" date="2009" name="J. Plant Physiol.">
        <title>Analysis of the soluble cell wall proteome of gymnosperms.</title>
        <authorList>
            <person name="Uzal E.N."/>
            <person name="Gomez-Ros L.V."/>
            <person name="Hernandez J.A."/>
            <person name="Pedreno M.A."/>
            <person name="Cuello J."/>
            <person name="Ros Barcelo A."/>
        </authorList>
    </citation>
    <scope>PROTEIN SEQUENCE</scope>
    <scope>SUBCELLULAR LOCATION</scope>
    <source>
        <strain evidence="1">PC-801</strain>
        <tissue evidence="1">Callus</tissue>
    </source>
</reference>
<protein>
    <recommendedName>
        <fullName>Unknown protein 1</fullName>
    </recommendedName>
</protein>
<dbReference type="GO" id="GO:0005576">
    <property type="term" value="C:extracellular region"/>
    <property type="evidence" value="ECO:0007669"/>
    <property type="project" value="UniProtKB-KW"/>
</dbReference>
<comment type="subcellular location">
    <subcellularLocation>
        <location evidence="1">Secreted</location>
        <location evidence="1">Cell wall</location>
    </subcellularLocation>
</comment>
<evidence type="ECO:0000269" key="1">
    <source>
    </source>
</evidence>
<evidence type="ECO:0000303" key="2">
    <source>
    </source>
</evidence>
<evidence type="ECO:0000305" key="3"/>
<sequence length="9" mass="1031">VLDELTADR</sequence>
<proteinExistence type="evidence at protein level"/>
<keyword id="KW-0134">Cell wall</keyword>
<keyword id="KW-0903">Direct protein sequencing</keyword>
<keyword id="KW-0964">Secreted</keyword>
<accession>P85485</accession>
<organism>
    <name type="scientific">Pinus halepensis</name>
    <name type="common">Aleppo pine</name>
    <dbReference type="NCBI Taxonomy" id="71633"/>
    <lineage>
        <taxon>Eukaryota</taxon>
        <taxon>Viridiplantae</taxon>
        <taxon>Streptophyta</taxon>
        <taxon>Embryophyta</taxon>
        <taxon>Tracheophyta</taxon>
        <taxon>Spermatophyta</taxon>
        <taxon>Pinopsida</taxon>
        <taxon>Pinidae</taxon>
        <taxon>Conifers I</taxon>
        <taxon>Pinales</taxon>
        <taxon>Pinaceae</taxon>
        <taxon>Pinus</taxon>
        <taxon>Pinus subgen. Pinus</taxon>
    </lineage>
</organism>